<dbReference type="EC" id="4.1.1.48" evidence="1"/>
<dbReference type="EMBL" id="CP000419">
    <property type="protein sequence ID" value="ABJ66703.1"/>
    <property type="molecule type" value="Genomic_DNA"/>
</dbReference>
<dbReference type="RefSeq" id="WP_011681518.1">
    <property type="nucleotide sequence ID" value="NZ_CP086001.1"/>
</dbReference>
<dbReference type="SMR" id="Q03JB9"/>
<dbReference type="KEGG" id="ste:STER_1551"/>
<dbReference type="HOGENOM" id="CLU_034247_2_1_9"/>
<dbReference type="UniPathway" id="UPA00035">
    <property type="reaction ID" value="UER00043"/>
</dbReference>
<dbReference type="GO" id="GO:0004425">
    <property type="term" value="F:indole-3-glycerol-phosphate synthase activity"/>
    <property type="evidence" value="ECO:0007669"/>
    <property type="project" value="UniProtKB-UniRule"/>
</dbReference>
<dbReference type="GO" id="GO:0004640">
    <property type="term" value="F:phosphoribosylanthranilate isomerase activity"/>
    <property type="evidence" value="ECO:0007669"/>
    <property type="project" value="TreeGrafter"/>
</dbReference>
<dbReference type="GO" id="GO:0000162">
    <property type="term" value="P:L-tryptophan biosynthetic process"/>
    <property type="evidence" value="ECO:0007669"/>
    <property type="project" value="UniProtKB-UniRule"/>
</dbReference>
<dbReference type="CDD" id="cd00331">
    <property type="entry name" value="IGPS"/>
    <property type="match status" value="1"/>
</dbReference>
<dbReference type="FunFam" id="3.20.20.70:FF:000024">
    <property type="entry name" value="Indole-3-glycerol phosphate synthase"/>
    <property type="match status" value="1"/>
</dbReference>
<dbReference type="Gene3D" id="3.20.20.70">
    <property type="entry name" value="Aldolase class I"/>
    <property type="match status" value="1"/>
</dbReference>
<dbReference type="HAMAP" id="MF_00134_B">
    <property type="entry name" value="IGPS_B"/>
    <property type="match status" value="1"/>
</dbReference>
<dbReference type="InterPro" id="IPR013785">
    <property type="entry name" value="Aldolase_TIM"/>
</dbReference>
<dbReference type="InterPro" id="IPR045186">
    <property type="entry name" value="Indole-3-glycerol_P_synth"/>
</dbReference>
<dbReference type="InterPro" id="IPR013798">
    <property type="entry name" value="Indole-3-glycerol_P_synth_dom"/>
</dbReference>
<dbReference type="InterPro" id="IPR001468">
    <property type="entry name" value="Indole-3-GlycerolPSynthase_CS"/>
</dbReference>
<dbReference type="InterPro" id="IPR011060">
    <property type="entry name" value="RibuloseP-bd_barrel"/>
</dbReference>
<dbReference type="NCBIfam" id="NF001371">
    <property type="entry name" value="PRK00278.1-3"/>
    <property type="match status" value="1"/>
</dbReference>
<dbReference type="NCBIfam" id="NF001377">
    <property type="entry name" value="PRK00278.2-4"/>
    <property type="match status" value="1"/>
</dbReference>
<dbReference type="PANTHER" id="PTHR22854:SF2">
    <property type="entry name" value="INDOLE-3-GLYCEROL-PHOSPHATE SYNTHASE"/>
    <property type="match status" value="1"/>
</dbReference>
<dbReference type="PANTHER" id="PTHR22854">
    <property type="entry name" value="TRYPTOPHAN BIOSYNTHESIS PROTEIN"/>
    <property type="match status" value="1"/>
</dbReference>
<dbReference type="Pfam" id="PF00218">
    <property type="entry name" value="IGPS"/>
    <property type="match status" value="1"/>
</dbReference>
<dbReference type="SUPFAM" id="SSF51366">
    <property type="entry name" value="Ribulose-phoshate binding barrel"/>
    <property type="match status" value="1"/>
</dbReference>
<dbReference type="PROSITE" id="PS00614">
    <property type="entry name" value="IGPS"/>
    <property type="match status" value="1"/>
</dbReference>
<keyword id="KW-0028">Amino-acid biosynthesis</keyword>
<keyword id="KW-0057">Aromatic amino acid biosynthesis</keyword>
<keyword id="KW-0210">Decarboxylase</keyword>
<keyword id="KW-0456">Lyase</keyword>
<keyword id="KW-0822">Tryptophan biosynthesis</keyword>
<name>TRPC_STRTD</name>
<gene>
    <name evidence="1" type="primary">trpC</name>
    <name type="ordered locus">STER_1551</name>
</gene>
<proteinExistence type="inferred from homology"/>
<comment type="catalytic activity">
    <reaction evidence="1">
        <text>1-(2-carboxyphenylamino)-1-deoxy-D-ribulose 5-phosphate + H(+) = (1S,2R)-1-C-(indol-3-yl)glycerol 3-phosphate + CO2 + H2O</text>
        <dbReference type="Rhea" id="RHEA:23476"/>
        <dbReference type="ChEBI" id="CHEBI:15377"/>
        <dbReference type="ChEBI" id="CHEBI:15378"/>
        <dbReference type="ChEBI" id="CHEBI:16526"/>
        <dbReference type="ChEBI" id="CHEBI:58613"/>
        <dbReference type="ChEBI" id="CHEBI:58866"/>
        <dbReference type="EC" id="4.1.1.48"/>
    </reaction>
</comment>
<comment type="pathway">
    <text evidence="1">Amino-acid biosynthesis; L-tryptophan biosynthesis; L-tryptophan from chorismate: step 4/5.</text>
</comment>
<comment type="similarity">
    <text evidence="1">Belongs to the TrpC family.</text>
</comment>
<protein>
    <recommendedName>
        <fullName evidence="1">Indole-3-glycerol phosphate synthase</fullName>
        <shortName evidence="1">IGPS</shortName>
        <ecNumber evidence="1">4.1.1.48</ecNumber>
    </recommendedName>
</protein>
<feature type="chain" id="PRO_1000095902" description="Indole-3-glycerol phosphate synthase">
    <location>
        <begin position="1"/>
        <end position="255"/>
    </location>
</feature>
<organism>
    <name type="scientific">Streptococcus thermophilus (strain ATCC BAA-491 / LMD-9)</name>
    <dbReference type="NCBI Taxonomy" id="322159"/>
    <lineage>
        <taxon>Bacteria</taxon>
        <taxon>Bacillati</taxon>
        <taxon>Bacillota</taxon>
        <taxon>Bacilli</taxon>
        <taxon>Lactobacillales</taxon>
        <taxon>Streptococcaceae</taxon>
        <taxon>Streptococcus</taxon>
    </lineage>
</organism>
<reference key="1">
    <citation type="journal article" date="2006" name="Proc. Natl. Acad. Sci. U.S.A.">
        <title>Comparative genomics of the lactic acid bacteria.</title>
        <authorList>
            <person name="Makarova K.S."/>
            <person name="Slesarev A."/>
            <person name="Wolf Y.I."/>
            <person name="Sorokin A."/>
            <person name="Mirkin B."/>
            <person name="Koonin E.V."/>
            <person name="Pavlov A."/>
            <person name="Pavlova N."/>
            <person name="Karamychev V."/>
            <person name="Polouchine N."/>
            <person name="Shakhova V."/>
            <person name="Grigoriev I."/>
            <person name="Lou Y."/>
            <person name="Rohksar D."/>
            <person name="Lucas S."/>
            <person name="Huang K."/>
            <person name="Goodstein D.M."/>
            <person name="Hawkins T."/>
            <person name="Plengvidhya V."/>
            <person name="Welker D."/>
            <person name="Hughes J."/>
            <person name="Goh Y."/>
            <person name="Benson A."/>
            <person name="Baldwin K."/>
            <person name="Lee J.-H."/>
            <person name="Diaz-Muniz I."/>
            <person name="Dosti B."/>
            <person name="Smeianov V."/>
            <person name="Wechter W."/>
            <person name="Barabote R."/>
            <person name="Lorca G."/>
            <person name="Altermann E."/>
            <person name="Barrangou R."/>
            <person name="Ganesan B."/>
            <person name="Xie Y."/>
            <person name="Rawsthorne H."/>
            <person name="Tamir D."/>
            <person name="Parker C."/>
            <person name="Breidt F."/>
            <person name="Broadbent J.R."/>
            <person name="Hutkins R."/>
            <person name="O'Sullivan D."/>
            <person name="Steele J."/>
            <person name="Unlu G."/>
            <person name="Saier M.H. Jr."/>
            <person name="Klaenhammer T."/>
            <person name="Richardson P."/>
            <person name="Kozyavkin S."/>
            <person name="Weimer B.C."/>
            <person name="Mills D.A."/>
        </authorList>
    </citation>
    <scope>NUCLEOTIDE SEQUENCE [LARGE SCALE GENOMIC DNA]</scope>
    <source>
        <strain>ATCC BAA-491 / LMD-9</strain>
    </source>
</reference>
<accession>Q03JB9</accession>
<evidence type="ECO:0000255" key="1">
    <source>
        <dbReference type="HAMAP-Rule" id="MF_00134"/>
    </source>
</evidence>
<sequence>MSKAFLPTILEQKEKEVAQLVMEDLQPLRQTYRLYDFLKSNQNKLQIISEVKKASPSMGDINLDVDIVAQAKTYEENGAAMISVLTDEVFFKGDISYLKEISTQVAIPTLAKDFIIDEKQIVRSRNAGATVILLIVAALPEARLKELYDFATSLGLEVLVETHNLPELEVAHRIGAEIIGVNNRNLVTFETDINTSLELSTHFKDKPVYISESAIFTGQDAALVAPYFNGILVGTALMTADNVAKKVKELQIDKG</sequence>